<organism>
    <name type="scientific">Burkholderia ambifaria (strain ATCC BAA-244 / DSM 16087 / CCUG 44356 / LMG 19182 / AMMD)</name>
    <name type="common">Burkholderia cepacia (strain AMMD)</name>
    <dbReference type="NCBI Taxonomy" id="339670"/>
    <lineage>
        <taxon>Bacteria</taxon>
        <taxon>Pseudomonadati</taxon>
        <taxon>Pseudomonadota</taxon>
        <taxon>Betaproteobacteria</taxon>
        <taxon>Burkholderiales</taxon>
        <taxon>Burkholderiaceae</taxon>
        <taxon>Burkholderia</taxon>
        <taxon>Burkholderia cepacia complex</taxon>
    </lineage>
</organism>
<accession>Q0BJ55</accession>
<gene>
    <name evidence="1" type="primary">rplL</name>
    <name type="ordered locus">Bamb_0258</name>
</gene>
<name>RL7_BURCM</name>
<proteinExistence type="inferred from homology"/>
<comment type="function">
    <text evidence="1">Forms part of the ribosomal stalk which helps the ribosome interact with GTP-bound translation factors. Is thus essential for accurate translation.</text>
</comment>
<comment type="subunit">
    <text evidence="1">Homodimer. Part of the ribosomal stalk of the 50S ribosomal subunit. Forms a multimeric L10(L12)X complex, where L10 forms an elongated spine to which 2 to 4 L12 dimers bind in a sequential fashion. Binds GTP-bound translation factors.</text>
</comment>
<comment type="similarity">
    <text evidence="1">Belongs to the bacterial ribosomal protein bL12 family.</text>
</comment>
<sequence length="124" mass="12505">MAIAKEDILAAVEGMTVLELNELVKAFEEKFGVSAAAVAVAGPAGGGAAAAAEEKTEFTVVLTEAGSNKVAVIKAVRELTGLGLKEAKDVVDGAPKAVKEGVDKAAADEAKKKLEDAGAKVEVK</sequence>
<keyword id="KW-0687">Ribonucleoprotein</keyword>
<keyword id="KW-0689">Ribosomal protein</keyword>
<protein>
    <recommendedName>
        <fullName evidence="1">Large ribosomal subunit protein bL12</fullName>
    </recommendedName>
    <alternativeName>
        <fullName evidence="2">50S ribosomal protein L7/L12</fullName>
    </alternativeName>
</protein>
<reference key="1">
    <citation type="submission" date="2006-08" db="EMBL/GenBank/DDBJ databases">
        <title>Complete sequence of chromosome 1 of Burkholderia cepacia AMMD.</title>
        <authorList>
            <person name="Copeland A."/>
            <person name="Lucas S."/>
            <person name="Lapidus A."/>
            <person name="Barry K."/>
            <person name="Detter J.C."/>
            <person name="Glavina del Rio T."/>
            <person name="Hammon N."/>
            <person name="Israni S."/>
            <person name="Pitluck S."/>
            <person name="Bruce D."/>
            <person name="Chain P."/>
            <person name="Malfatti S."/>
            <person name="Shin M."/>
            <person name="Vergez L."/>
            <person name="Schmutz J."/>
            <person name="Larimer F."/>
            <person name="Land M."/>
            <person name="Hauser L."/>
            <person name="Kyrpides N."/>
            <person name="Kim E."/>
            <person name="Parke J."/>
            <person name="Coenye T."/>
            <person name="Konstantinidis K."/>
            <person name="Ramette A."/>
            <person name="Tiedje J."/>
            <person name="Richardson P."/>
        </authorList>
    </citation>
    <scope>NUCLEOTIDE SEQUENCE [LARGE SCALE GENOMIC DNA]</scope>
    <source>
        <strain>ATCC BAA-244 / DSM 16087 / CCUG 44356 / LMG 19182 / AMMD</strain>
    </source>
</reference>
<feature type="chain" id="PRO_1000006970" description="Large ribosomal subunit protein bL12">
    <location>
        <begin position="1"/>
        <end position="124"/>
    </location>
</feature>
<dbReference type="EMBL" id="CP000440">
    <property type="protein sequence ID" value="ABI85818.1"/>
    <property type="molecule type" value="Genomic_DNA"/>
</dbReference>
<dbReference type="RefSeq" id="WP_006759674.1">
    <property type="nucleotide sequence ID" value="NZ_CP009798.1"/>
</dbReference>
<dbReference type="SMR" id="Q0BJ55"/>
<dbReference type="GeneID" id="93084327"/>
<dbReference type="KEGG" id="bam:Bamb_0258"/>
<dbReference type="PATRIC" id="fig|339670.21.peg.1362"/>
<dbReference type="eggNOG" id="COG0222">
    <property type="taxonomic scope" value="Bacteria"/>
</dbReference>
<dbReference type="Proteomes" id="UP000000662">
    <property type="component" value="Chromosome 1"/>
</dbReference>
<dbReference type="GO" id="GO:0022625">
    <property type="term" value="C:cytosolic large ribosomal subunit"/>
    <property type="evidence" value="ECO:0007669"/>
    <property type="project" value="TreeGrafter"/>
</dbReference>
<dbReference type="GO" id="GO:0003729">
    <property type="term" value="F:mRNA binding"/>
    <property type="evidence" value="ECO:0007669"/>
    <property type="project" value="TreeGrafter"/>
</dbReference>
<dbReference type="GO" id="GO:0003735">
    <property type="term" value="F:structural constituent of ribosome"/>
    <property type="evidence" value="ECO:0007669"/>
    <property type="project" value="InterPro"/>
</dbReference>
<dbReference type="GO" id="GO:0006412">
    <property type="term" value="P:translation"/>
    <property type="evidence" value="ECO:0007669"/>
    <property type="project" value="UniProtKB-UniRule"/>
</dbReference>
<dbReference type="CDD" id="cd00387">
    <property type="entry name" value="Ribosomal_L7_L12"/>
    <property type="match status" value="1"/>
</dbReference>
<dbReference type="FunFam" id="3.30.1390.10:FF:000001">
    <property type="entry name" value="50S ribosomal protein L7/L12"/>
    <property type="match status" value="1"/>
</dbReference>
<dbReference type="Gene3D" id="3.30.1390.10">
    <property type="match status" value="1"/>
</dbReference>
<dbReference type="Gene3D" id="1.20.5.710">
    <property type="entry name" value="Single helix bin"/>
    <property type="match status" value="1"/>
</dbReference>
<dbReference type="HAMAP" id="MF_00368">
    <property type="entry name" value="Ribosomal_bL12"/>
    <property type="match status" value="1"/>
</dbReference>
<dbReference type="InterPro" id="IPR000206">
    <property type="entry name" value="Ribosomal_bL12"/>
</dbReference>
<dbReference type="InterPro" id="IPR013823">
    <property type="entry name" value="Ribosomal_bL12_C"/>
</dbReference>
<dbReference type="InterPro" id="IPR014719">
    <property type="entry name" value="Ribosomal_bL12_C/ClpS-like"/>
</dbReference>
<dbReference type="InterPro" id="IPR008932">
    <property type="entry name" value="Ribosomal_bL12_oligo"/>
</dbReference>
<dbReference type="InterPro" id="IPR036235">
    <property type="entry name" value="Ribosomal_bL12_oligo_N_sf"/>
</dbReference>
<dbReference type="NCBIfam" id="TIGR00855">
    <property type="entry name" value="L12"/>
    <property type="match status" value="1"/>
</dbReference>
<dbReference type="PANTHER" id="PTHR45987">
    <property type="entry name" value="39S RIBOSOMAL PROTEIN L12"/>
    <property type="match status" value="1"/>
</dbReference>
<dbReference type="PANTHER" id="PTHR45987:SF4">
    <property type="entry name" value="LARGE RIBOSOMAL SUBUNIT PROTEIN BL12M"/>
    <property type="match status" value="1"/>
</dbReference>
<dbReference type="Pfam" id="PF00542">
    <property type="entry name" value="Ribosomal_L12"/>
    <property type="match status" value="1"/>
</dbReference>
<dbReference type="Pfam" id="PF16320">
    <property type="entry name" value="Ribosomal_L12_N"/>
    <property type="match status" value="1"/>
</dbReference>
<dbReference type="SUPFAM" id="SSF54736">
    <property type="entry name" value="ClpS-like"/>
    <property type="match status" value="1"/>
</dbReference>
<dbReference type="SUPFAM" id="SSF48300">
    <property type="entry name" value="Ribosomal protein L7/12, oligomerisation (N-terminal) domain"/>
    <property type="match status" value="1"/>
</dbReference>
<evidence type="ECO:0000255" key="1">
    <source>
        <dbReference type="HAMAP-Rule" id="MF_00368"/>
    </source>
</evidence>
<evidence type="ECO:0000305" key="2"/>